<keyword id="KW-1015">Disulfide bond</keyword>
<keyword id="KW-0378">Hydrolase</keyword>
<keyword id="KW-1185">Reference proteome</keyword>
<keyword id="KW-0964">Secreted</keyword>
<keyword id="KW-0719">Serine esterase</keyword>
<keyword id="KW-0732">Signal</keyword>
<accession>B6H2E9</accession>
<sequence length="212" mass="22229">MNFKLLSLLLAGLATAGPIEQRQTSSSGNELRDGPCQPVTFIFARASTEQGLLGGSTGPAVCNDLKSARNQEVACQGVGPKYQATLAANSLPAGTSDEAIEEAKGLFEQAASKCPDTQIVAGGYSQGTAVMHGAIPKLSDAIKDQIKGVVLFGDTRNQQDNEQIPDFPKDKTKIYCAVGDQVCHGSLIVAAPHFSYVADAGDASRFLVEKLD</sequence>
<gene>
    <name type="ORF">Pc13g05110</name>
</gene>
<evidence type="ECO:0000250" key="1">
    <source>
        <dbReference type="UniProtKB" id="A0A2J8C362"/>
    </source>
</evidence>
<evidence type="ECO:0000250" key="2">
    <source>
        <dbReference type="UniProtKB" id="P00590"/>
    </source>
</evidence>
<evidence type="ECO:0000250" key="3">
    <source>
        <dbReference type="UniProtKB" id="P11373"/>
    </source>
</evidence>
<evidence type="ECO:0000250" key="4">
    <source>
        <dbReference type="UniProtKB" id="P52956"/>
    </source>
</evidence>
<evidence type="ECO:0000255" key="5"/>
<evidence type="ECO:0000255" key="6">
    <source>
        <dbReference type="PROSITE-ProRule" id="PRU10108"/>
    </source>
</evidence>
<evidence type="ECO:0000255" key="7">
    <source>
        <dbReference type="PROSITE-ProRule" id="PRU10109"/>
    </source>
</evidence>
<evidence type="ECO:0000305" key="8"/>
<organism>
    <name type="scientific">Penicillium rubens (strain ATCC 28089 / DSM 1075 / NRRL 1951 / Wisconsin 54-1255)</name>
    <name type="common">Penicillium chrysogenum</name>
    <dbReference type="NCBI Taxonomy" id="500485"/>
    <lineage>
        <taxon>Eukaryota</taxon>
        <taxon>Fungi</taxon>
        <taxon>Dikarya</taxon>
        <taxon>Ascomycota</taxon>
        <taxon>Pezizomycotina</taxon>
        <taxon>Eurotiomycetes</taxon>
        <taxon>Eurotiomycetidae</taxon>
        <taxon>Eurotiales</taxon>
        <taxon>Aspergillaceae</taxon>
        <taxon>Penicillium</taxon>
        <taxon>Penicillium chrysogenum species complex</taxon>
    </lineage>
</organism>
<proteinExistence type="inferred from homology"/>
<name>CUTI2_PENRW</name>
<reference key="1">
    <citation type="journal article" date="2008" name="Nat. Biotechnol.">
        <title>Genome sequencing and analysis of the filamentous fungus Penicillium chrysogenum.</title>
        <authorList>
            <person name="van den Berg M.A."/>
            <person name="Albang R."/>
            <person name="Albermann K."/>
            <person name="Badger J.H."/>
            <person name="Daran J.-M."/>
            <person name="Driessen A.J.M."/>
            <person name="Garcia-Estrada C."/>
            <person name="Fedorova N.D."/>
            <person name="Harris D.M."/>
            <person name="Heijne W.H.M."/>
            <person name="Joardar V.S."/>
            <person name="Kiel J.A.K.W."/>
            <person name="Kovalchuk A."/>
            <person name="Martin J.F."/>
            <person name="Nierman W.C."/>
            <person name="Nijland J.G."/>
            <person name="Pronk J.T."/>
            <person name="Roubos J.A."/>
            <person name="van der Klei I.J."/>
            <person name="van Peij N.N.M.E."/>
            <person name="Veenhuis M."/>
            <person name="von Doehren H."/>
            <person name="Wagner C."/>
            <person name="Wortman J.R."/>
            <person name="Bovenberg R.A.L."/>
        </authorList>
    </citation>
    <scope>NUCLEOTIDE SEQUENCE [LARGE SCALE GENOMIC DNA]</scope>
    <source>
        <strain>ATCC 28089 / DSM 1075 / NRRL 1951 / Wisconsin 54-1255</strain>
    </source>
</reference>
<feature type="signal peptide" evidence="5">
    <location>
        <begin position="1"/>
        <end position="16"/>
    </location>
</feature>
<feature type="chain" id="PRO_5000408953" description="Probable cutinase 2">
    <location>
        <begin position="17"/>
        <end position="212"/>
    </location>
</feature>
<feature type="active site" description="Nucleophile" evidence="2">
    <location>
        <position position="125"/>
    </location>
</feature>
<feature type="active site" evidence="1">
    <location>
        <position position="180"/>
    </location>
</feature>
<feature type="active site" description="Proton donor/acceptor" evidence="2">
    <location>
        <position position="193"/>
    </location>
</feature>
<feature type="site" description="Transition state stabilizer" evidence="2">
    <location>
        <position position="47"/>
    </location>
</feature>
<feature type="site" description="Transition state stabilizer" evidence="2">
    <location>
        <position position="126"/>
    </location>
</feature>
<feature type="disulfide bond" evidence="4">
    <location>
        <begin position="36"/>
        <end position="114"/>
    </location>
</feature>
<feature type="disulfide bond" evidence="4">
    <location>
        <begin position="62"/>
        <end position="75"/>
    </location>
</feature>
<feature type="disulfide bond" evidence="4">
    <location>
        <begin position="176"/>
        <end position="183"/>
    </location>
</feature>
<dbReference type="EC" id="3.1.1.74" evidence="6 7"/>
<dbReference type="EMBL" id="AM920428">
    <property type="protein sequence ID" value="CAP91580.1"/>
    <property type="molecule type" value="Genomic_DNA"/>
</dbReference>
<dbReference type="RefSeq" id="XP_002558946.1">
    <property type="nucleotide sequence ID" value="XM_002558900.1"/>
</dbReference>
<dbReference type="SMR" id="B6H2E9"/>
<dbReference type="ESTHER" id="pencw-cuti2">
    <property type="family name" value="Cutinase"/>
</dbReference>
<dbReference type="GeneID" id="8312382"/>
<dbReference type="KEGG" id="pcs:N7525_003650"/>
<dbReference type="VEuPathDB" id="FungiDB:PCH_Pc13g05110"/>
<dbReference type="eggNOG" id="ENOG502SI38">
    <property type="taxonomic scope" value="Eukaryota"/>
</dbReference>
<dbReference type="HOGENOM" id="CLU_040058_2_0_1"/>
<dbReference type="OMA" id="KIFCLPT"/>
<dbReference type="OrthoDB" id="3225429at2759"/>
<dbReference type="BioCyc" id="PCHR:PC13G05110-MONOMER"/>
<dbReference type="Proteomes" id="UP000000724">
    <property type="component" value="Contig Pc00c13"/>
</dbReference>
<dbReference type="GO" id="GO:0005576">
    <property type="term" value="C:extracellular region"/>
    <property type="evidence" value="ECO:0007669"/>
    <property type="project" value="UniProtKB-SubCell"/>
</dbReference>
<dbReference type="GO" id="GO:0050525">
    <property type="term" value="F:cutinase activity"/>
    <property type="evidence" value="ECO:0000250"/>
    <property type="project" value="UniProtKB"/>
</dbReference>
<dbReference type="GO" id="GO:0017000">
    <property type="term" value="P:antibiotic biosynthetic process"/>
    <property type="evidence" value="ECO:0007669"/>
    <property type="project" value="UniProtKB-ARBA"/>
</dbReference>
<dbReference type="GO" id="GO:0016052">
    <property type="term" value="P:carbohydrate catabolic process"/>
    <property type="evidence" value="ECO:0007669"/>
    <property type="project" value="TreeGrafter"/>
</dbReference>
<dbReference type="GO" id="GO:0072330">
    <property type="term" value="P:monocarboxylic acid biosynthetic process"/>
    <property type="evidence" value="ECO:0007669"/>
    <property type="project" value="UniProtKB-ARBA"/>
</dbReference>
<dbReference type="FunFam" id="3.40.50.1820:FF:000235">
    <property type="entry name" value="Cutinase 1"/>
    <property type="match status" value="1"/>
</dbReference>
<dbReference type="Gene3D" id="3.40.50.1820">
    <property type="entry name" value="alpha/beta hydrolase"/>
    <property type="match status" value="1"/>
</dbReference>
<dbReference type="InterPro" id="IPR029058">
    <property type="entry name" value="AB_hydrolase_fold"/>
</dbReference>
<dbReference type="InterPro" id="IPR000675">
    <property type="entry name" value="Cutinase/axe"/>
</dbReference>
<dbReference type="InterPro" id="IPR043580">
    <property type="entry name" value="CUTINASE_1"/>
</dbReference>
<dbReference type="InterPro" id="IPR043579">
    <property type="entry name" value="CUTINASE_2"/>
</dbReference>
<dbReference type="InterPro" id="IPR011150">
    <property type="entry name" value="Cutinase_monf"/>
</dbReference>
<dbReference type="PANTHER" id="PTHR48250:SF3">
    <property type="entry name" value="CUTINASE 1-RELATED"/>
    <property type="match status" value="1"/>
</dbReference>
<dbReference type="PANTHER" id="PTHR48250">
    <property type="entry name" value="CUTINASE 2-RELATED"/>
    <property type="match status" value="1"/>
</dbReference>
<dbReference type="Pfam" id="PF01083">
    <property type="entry name" value="Cutinase"/>
    <property type="match status" value="1"/>
</dbReference>
<dbReference type="PRINTS" id="PR00129">
    <property type="entry name" value="CUTINASE"/>
</dbReference>
<dbReference type="SMART" id="SM01110">
    <property type="entry name" value="Cutinase"/>
    <property type="match status" value="1"/>
</dbReference>
<dbReference type="SUPFAM" id="SSF53474">
    <property type="entry name" value="alpha/beta-Hydrolases"/>
    <property type="match status" value="1"/>
</dbReference>
<dbReference type="PROSITE" id="PS00155">
    <property type="entry name" value="CUTINASE_1"/>
    <property type="match status" value="1"/>
</dbReference>
<dbReference type="PROSITE" id="PS00931">
    <property type="entry name" value="CUTINASE_2"/>
    <property type="match status" value="1"/>
</dbReference>
<comment type="function">
    <text evidence="2">Catalyzes the hydrolysis of complex carboxylic polyesters found in the cell wall of plants (By similarity). Degrades cutin, a macromolecule that forms the structure of the plant cuticle (By similarity).</text>
</comment>
<comment type="catalytic activity">
    <reaction evidence="6 7">
        <text>cutin + H2O = cutin monomers.</text>
        <dbReference type="EC" id="3.1.1.74"/>
    </reaction>
</comment>
<comment type="subcellular location">
    <subcellularLocation>
        <location evidence="3">Secreted</location>
    </subcellularLocation>
</comment>
<comment type="similarity">
    <text evidence="8">Belongs to the cutinase family.</text>
</comment>
<protein>
    <recommendedName>
        <fullName>Probable cutinase 2</fullName>
        <ecNumber evidence="6 7">3.1.1.74</ecNumber>
    </recommendedName>
    <alternativeName>
        <fullName>Cutin hydrolase 2</fullName>
    </alternativeName>
</protein>